<gene>
    <name evidence="1" type="primary">bioB</name>
    <name type="ordered locus">P9303_09961</name>
</gene>
<feature type="chain" id="PRO_0000381539" description="Biotin synthase">
    <location>
        <begin position="1"/>
        <end position="335"/>
    </location>
</feature>
<feature type="domain" description="Radical SAM core" evidence="2">
    <location>
        <begin position="51"/>
        <end position="281"/>
    </location>
</feature>
<feature type="binding site" evidence="1">
    <location>
        <position position="66"/>
    </location>
    <ligand>
        <name>[4Fe-4S] cluster</name>
        <dbReference type="ChEBI" id="CHEBI:49883"/>
        <note>4Fe-4S-S-AdoMet</note>
    </ligand>
</feature>
<feature type="binding site" evidence="1">
    <location>
        <position position="70"/>
    </location>
    <ligand>
        <name>[4Fe-4S] cluster</name>
        <dbReference type="ChEBI" id="CHEBI:49883"/>
        <note>4Fe-4S-S-AdoMet</note>
    </ligand>
</feature>
<feature type="binding site" evidence="1">
    <location>
        <position position="73"/>
    </location>
    <ligand>
        <name>[4Fe-4S] cluster</name>
        <dbReference type="ChEBI" id="CHEBI:49883"/>
        <note>4Fe-4S-S-AdoMet</note>
    </ligand>
</feature>
<feature type="binding site" evidence="1">
    <location>
        <position position="112"/>
    </location>
    <ligand>
        <name>[2Fe-2S] cluster</name>
        <dbReference type="ChEBI" id="CHEBI:190135"/>
    </ligand>
</feature>
<feature type="binding site" evidence="1">
    <location>
        <position position="144"/>
    </location>
    <ligand>
        <name>[2Fe-2S] cluster</name>
        <dbReference type="ChEBI" id="CHEBI:190135"/>
    </ligand>
</feature>
<feature type="binding site" evidence="1">
    <location>
        <position position="204"/>
    </location>
    <ligand>
        <name>[2Fe-2S] cluster</name>
        <dbReference type="ChEBI" id="CHEBI:190135"/>
    </ligand>
</feature>
<feature type="binding site" evidence="1">
    <location>
        <position position="276"/>
    </location>
    <ligand>
        <name>[2Fe-2S] cluster</name>
        <dbReference type="ChEBI" id="CHEBI:190135"/>
    </ligand>
</feature>
<keyword id="KW-0001">2Fe-2S</keyword>
<keyword id="KW-0004">4Fe-4S</keyword>
<keyword id="KW-0093">Biotin biosynthesis</keyword>
<keyword id="KW-0408">Iron</keyword>
<keyword id="KW-0411">Iron-sulfur</keyword>
<keyword id="KW-0479">Metal-binding</keyword>
<keyword id="KW-0949">S-adenosyl-L-methionine</keyword>
<keyword id="KW-0808">Transferase</keyword>
<protein>
    <recommendedName>
        <fullName evidence="1">Biotin synthase</fullName>
        <ecNumber evidence="1">2.8.1.6</ecNumber>
    </recommendedName>
</protein>
<proteinExistence type="inferred from homology"/>
<evidence type="ECO:0000255" key="1">
    <source>
        <dbReference type="HAMAP-Rule" id="MF_01694"/>
    </source>
</evidence>
<evidence type="ECO:0000255" key="2">
    <source>
        <dbReference type="PROSITE-ProRule" id="PRU01266"/>
    </source>
</evidence>
<sequence length="335" mass="36903">MTVLIAKDLTFEPVVHRYDWTVDEVRELLERPLMDLLWQAQLVHRTANPGYRVQLASLLSVKTGGCQEDCAYCPQSMHNSSDVEGQPDLVVQIQTVLERARAAKDAGADRFCMGWAWREIRDGAQFEAMLAMVSGVRELGLEACVTAGMLTEKQASRLADAGLTAYNHNLDTSPEYYDQIITTRTYQERIETLQKVRSAGITLCCGGIIGMGESTLDRASLLCVLANINPHPESVPINGLVAVEGTPLQDLPAVDPLEMVRMVATARILMPRSRVRLSAGREQLGREAQILCLQAGADSIFYGDSLLTTSNPDVKTDRELLSQAGVHANWEESDE</sequence>
<accession>A2C8D5</accession>
<reference key="1">
    <citation type="journal article" date="2007" name="PLoS Genet.">
        <title>Patterns and implications of gene gain and loss in the evolution of Prochlorococcus.</title>
        <authorList>
            <person name="Kettler G.C."/>
            <person name="Martiny A.C."/>
            <person name="Huang K."/>
            <person name="Zucker J."/>
            <person name="Coleman M.L."/>
            <person name="Rodrigue S."/>
            <person name="Chen F."/>
            <person name="Lapidus A."/>
            <person name="Ferriera S."/>
            <person name="Johnson J."/>
            <person name="Steglich C."/>
            <person name="Church G.M."/>
            <person name="Richardson P."/>
            <person name="Chisholm S.W."/>
        </authorList>
    </citation>
    <scope>NUCLEOTIDE SEQUENCE [LARGE SCALE GENOMIC DNA]</scope>
    <source>
        <strain>MIT 9303</strain>
    </source>
</reference>
<dbReference type="EC" id="2.8.1.6" evidence="1"/>
<dbReference type="EMBL" id="CP000554">
    <property type="protein sequence ID" value="ABM77745.1"/>
    <property type="molecule type" value="Genomic_DNA"/>
</dbReference>
<dbReference type="RefSeq" id="WP_011825650.1">
    <property type="nucleotide sequence ID" value="NC_008820.1"/>
</dbReference>
<dbReference type="SMR" id="A2C8D5"/>
<dbReference type="STRING" id="59922.P9303_09961"/>
<dbReference type="KEGG" id="pmf:P9303_09961"/>
<dbReference type="HOGENOM" id="CLU_033172_1_2_3"/>
<dbReference type="BioCyc" id="PMAR59922:G1G80-900-MONOMER"/>
<dbReference type="UniPathway" id="UPA00078">
    <property type="reaction ID" value="UER00162"/>
</dbReference>
<dbReference type="Proteomes" id="UP000002274">
    <property type="component" value="Chromosome"/>
</dbReference>
<dbReference type="GO" id="GO:0051537">
    <property type="term" value="F:2 iron, 2 sulfur cluster binding"/>
    <property type="evidence" value="ECO:0007669"/>
    <property type="project" value="UniProtKB-KW"/>
</dbReference>
<dbReference type="GO" id="GO:0051539">
    <property type="term" value="F:4 iron, 4 sulfur cluster binding"/>
    <property type="evidence" value="ECO:0007669"/>
    <property type="project" value="UniProtKB-KW"/>
</dbReference>
<dbReference type="GO" id="GO:0004076">
    <property type="term" value="F:biotin synthase activity"/>
    <property type="evidence" value="ECO:0007669"/>
    <property type="project" value="UniProtKB-UniRule"/>
</dbReference>
<dbReference type="GO" id="GO:0005506">
    <property type="term" value="F:iron ion binding"/>
    <property type="evidence" value="ECO:0007669"/>
    <property type="project" value="UniProtKB-UniRule"/>
</dbReference>
<dbReference type="GO" id="GO:0009102">
    <property type="term" value="P:biotin biosynthetic process"/>
    <property type="evidence" value="ECO:0007669"/>
    <property type="project" value="UniProtKB-UniRule"/>
</dbReference>
<dbReference type="CDD" id="cd01335">
    <property type="entry name" value="Radical_SAM"/>
    <property type="match status" value="1"/>
</dbReference>
<dbReference type="Gene3D" id="3.20.20.70">
    <property type="entry name" value="Aldolase class I"/>
    <property type="match status" value="1"/>
</dbReference>
<dbReference type="HAMAP" id="MF_01694">
    <property type="entry name" value="BioB"/>
    <property type="match status" value="1"/>
</dbReference>
<dbReference type="InterPro" id="IPR013785">
    <property type="entry name" value="Aldolase_TIM"/>
</dbReference>
<dbReference type="InterPro" id="IPR010722">
    <property type="entry name" value="BATS_dom"/>
</dbReference>
<dbReference type="InterPro" id="IPR002684">
    <property type="entry name" value="Biotin_synth/BioAB"/>
</dbReference>
<dbReference type="InterPro" id="IPR024177">
    <property type="entry name" value="Biotin_synthase"/>
</dbReference>
<dbReference type="InterPro" id="IPR006638">
    <property type="entry name" value="Elp3/MiaA/NifB-like_rSAM"/>
</dbReference>
<dbReference type="InterPro" id="IPR007197">
    <property type="entry name" value="rSAM"/>
</dbReference>
<dbReference type="NCBIfam" id="TIGR00433">
    <property type="entry name" value="bioB"/>
    <property type="match status" value="1"/>
</dbReference>
<dbReference type="PANTHER" id="PTHR22976">
    <property type="entry name" value="BIOTIN SYNTHASE"/>
    <property type="match status" value="1"/>
</dbReference>
<dbReference type="PANTHER" id="PTHR22976:SF2">
    <property type="entry name" value="BIOTIN SYNTHASE, MITOCHONDRIAL"/>
    <property type="match status" value="1"/>
</dbReference>
<dbReference type="Pfam" id="PF06968">
    <property type="entry name" value="BATS"/>
    <property type="match status" value="1"/>
</dbReference>
<dbReference type="Pfam" id="PF04055">
    <property type="entry name" value="Radical_SAM"/>
    <property type="match status" value="1"/>
</dbReference>
<dbReference type="PIRSF" id="PIRSF001619">
    <property type="entry name" value="Biotin_synth"/>
    <property type="match status" value="1"/>
</dbReference>
<dbReference type="SFLD" id="SFLDF00272">
    <property type="entry name" value="biotin_synthase"/>
    <property type="match status" value="1"/>
</dbReference>
<dbReference type="SFLD" id="SFLDG01278">
    <property type="entry name" value="biotin_synthase_like"/>
    <property type="match status" value="1"/>
</dbReference>
<dbReference type="SMART" id="SM00876">
    <property type="entry name" value="BATS"/>
    <property type="match status" value="1"/>
</dbReference>
<dbReference type="SMART" id="SM00729">
    <property type="entry name" value="Elp3"/>
    <property type="match status" value="1"/>
</dbReference>
<dbReference type="SUPFAM" id="SSF102114">
    <property type="entry name" value="Radical SAM enzymes"/>
    <property type="match status" value="1"/>
</dbReference>
<dbReference type="PROSITE" id="PS51918">
    <property type="entry name" value="RADICAL_SAM"/>
    <property type="match status" value="1"/>
</dbReference>
<organism>
    <name type="scientific">Prochlorococcus marinus (strain MIT 9303)</name>
    <dbReference type="NCBI Taxonomy" id="59922"/>
    <lineage>
        <taxon>Bacteria</taxon>
        <taxon>Bacillati</taxon>
        <taxon>Cyanobacteriota</taxon>
        <taxon>Cyanophyceae</taxon>
        <taxon>Synechococcales</taxon>
        <taxon>Prochlorococcaceae</taxon>
        <taxon>Prochlorococcus</taxon>
    </lineage>
</organism>
<comment type="function">
    <text evidence="1">Catalyzes the conversion of dethiobiotin (DTB) to biotin by the insertion of a sulfur atom into dethiobiotin via a radical-based mechanism.</text>
</comment>
<comment type="catalytic activity">
    <reaction evidence="1">
        <text>(4R,5S)-dethiobiotin + (sulfur carrier)-SH + 2 reduced [2Fe-2S]-[ferredoxin] + 2 S-adenosyl-L-methionine = (sulfur carrier)-H + biotin + 2 5'-deoxyadenosine + 2 L-methionine + 2 oxidized [2Fe-2S]-[ferredoxin]</text>
        <dbReference type="Rhea" id="RHEA:22060"/>
        <dbReference type="Rhea" id="RHEA-COMP:10000"/>
        <dbReference type="Rhea" id="RHEA-COMP:10001"/>
        <dbReference type="Rhea" id="RHEA-COMP:14737"/>
        <dbReference type="Rhea" id="RHEA-COMP:14739"/>
        <dbReference type="ChEBI" id="CHEBI:17319"/>
        <dbReference type="ChEBI" id="CHEBI:29917"/>
        <dbReference type="ChEBI" id="CHEBI:33737"/>
        <dbReference type="ChEBI" id="CHEBI:33738"/>
        <dbReference type="ChEBI" id="CHEBI:57586"/>
        <dbReference type="ChEBI" id="CHEBI:57844"/>
        <dbReference type="ChEBI" id="CHEBI:59789"/>
        <dbReference type="ChEBI" id="CHEBI:64428"/>
        <dbReference type="ChEBI" id="CHEBI:149473"/>
        <dbReference type="EC" id="2.8.1.6"/>
    </reaction>
</comment>
<comment type="cofactor">
    <cofactor evidence="1">
        <name>[4Fe-4S] cluster</name>
        <dbReference type="ChEBI" id="CHEBI:49883"/>
    </cofactor>
    <text evidence="1">Binds 1 [4Fe-4S] cluster. The cluster is coordinated with 3 cysteines and an exchangeable S-adenosyl-L-methionine.</text>
</comment>
<comment type="cofactor">
    <cofactor evidence="1">
        <name>[2Fe-2S] cluster</name>
        <dbReference type="ChEBI" id="CHEBI:190135"/>
    </cofactor>
    <text evidence="1">Binds 1 [2Fe-2S] cluster. The cluster is coordinated with 3 cysteines and 1 arginine.</text>
</comment>
<comment type="pathway">
    <text evidence="1">Cofactor biosynthesis; biotin biosynthesis; biotin from 7,8-diaminononanoate: step 2/2.</text>
</comment>
<comment type="subunit">
    <text evidence="1">Homodimer.</text>
</comment>
<comment type="similarity">
    <text evidence="1">Belongs to the radical SAM superfamily. Biotin synthase family.</text>
</comment>
<name>BIOB_PROM3</name>